<reference key="1">
    <citation type="journal article" date="2002" name="J. Bacteriol.">
        <title>Whole-genome comparison of Mycobacterium tuberculosis clinical and laboratory strains.</title>
        <authorList>
            <person name="Fleischmann R.D."/>
            <person name="Alland D."/>
            <person name="Eisen J.A."/>
            <person name="Carpenter L."/>
            <person name="White O."/>
            <person name="Peterson J.D."/>
            <person name="DeBoy R.T."/>
            <person name="Dodson R.J."/>
            <person name="Gwinn M.L."/>
            <person name="Haft D.H."/>
            <person name="Hickey E.K."/>
            <person name="Kolonay J.F."/>
            <person name="Nelson W.C."/>
            <person name="Umayam L.A."/>
            <person name="Ermolaeva M.D."/>
            <person name="Salzberg S.L."/>
            <person name="Delcher A."/>
            <person name="Utterback T.R."/>
            <person name="Weidman J.F."/>
            <person name="Khouri H.M."/>
            <person name="Gill J."/>
            <person name="Mikula A."/>
            <person name="Bishai W."/>
            <person name="Jacobs W.R. Jr."/>
            <person name="Venter J.C."/>
            <person name="Fraser C.M."/>
        </authorList>
    </citation>
    <scope>NUCLEOTIDE SEQUENCE [LARGE SCALE GENOMIC DNA]</scope>
    <source>
        <strain>CDC 1551 / Oshkosh</strain>
    </source>
</reference>
<dbReference type="EMBL" id="AE000516">
    <property type="protein sequence ID" value="AAK46299.1"/>
    <property type="molecule type" value="Genomic_DNA"/>
</dbReference>
<dbReference type="PIR" id="H70889">
    <property type="entry name" value="H70889"/>
</dbReference>
<dbReference type="RefSeq" id="WP_003899110.1">
    <property type="nucleotide sequence ID" value="NZ_KK341227.1"/>
</dbReference>
<dbReference type="KEGG" id="mtc:MT2024.1"/>
<dbReference type="PATRIC" id="fig|83331.31.peg.2180"/>
<dbReference type="HOGENOM" id="CLU_072301_3_0_11"/>
<dbReference type="Proteomes" id="UP000001020">
    <property type="component" value="Chromosome"/>
</dbReference>
<dbReference type="GO" id="GO:0009279">
    <property type="term" value="C:cell outer membrane"/>
    <property type="evidence" value="ECO:0007669"/>
    <property type="project" value="UniProtKB-SubCell"/>
</dbReference>
<dbReference type="PANTHER" id="PTHR37042">
    <property type="entry name" value="OUTER MEMBRANE PROTEIN RV1973"/>
    <property type="match status" value="1"/>
</dbReference>
<dbReference type="PANTHER" id="PTHR37042:SF4">
    <property type="entry name" value="OUTER MEMBRANE PROTEIN RV1973"/>
    <property type="match status" value="1"/>
</dbReference>
<keyword id="KW-0998">Cell outer membrane</keyword>
<keyword id="KW-0472">Membrane</keyword>
<keyword id="KW-1185">Reference proteome</keyword>
<keyword id="KW-0732">Signal</keyword>
<proteinExistence type="inferred from homology"/>
<name>OMP2_MYCTO</name>
<feature type="signal peptide" evidence="2">
    <location>
        <begin position="1"/>
        <end position="22"/>
    </location>
</feature>
<feature type="chain" id="PRO_0000427878" description="Outer membrane protein MT2024.1">
    <location>
        <begin position="23"/>
        <end position="160"/>
    </location>
</feature>
<evidence type="ECO:0000250" key="1"/>
<evidence type="ECO:0000255" key="2"/>
<comment type="subcellular location">
    <subcellularLocation>
        <location evidence="1">Cell outer membrane</location>
    </subcellularLocation>
</comment>
<sequence length="160" mass="16824">MSWSRVIAYGLLPGLALALTCGAGLLKWQDGAVRDAAVARAESVRAATDGTTALLSYRPDTVQHDLESARSRLTGTFLDAYTQLTHDVVIPGAQQKQISAVATVAAAASVSTSADRAVVLLFVNQTITVGKDAPTTAASSVRVTLDNINGRWLISQFEPI</sequence>
<gene>
    <name type="ordered locus">MT2024.1</name>
</gene>
<organism>
    <name type="scientific">Mycobacterium tuberculosis (strain CDC 1551 / Oshkosh)</name>
    <dbReference type="NCBI Taxonomy" id="83331"/>
    <lineage>
        <taxon>Bacteria</taxon>
        <taxon>Bacillati</taxon>
        <taxon>Actinomycetota</taxon>
        <taxon>Actinomycetes</taxon>
        <taxon>Mycobacteriales</taxon>
        <taxon>Mycobacteriaceae</taxon>
        <taxon>Mycobacterium</taxon>
        <taxon>Mycobacterium tuberculosis complex</taxon>
    </lineage>
</organism>
<protein>
    <recommendedName>
        <fullName>Outer membrane protein MT2024.1</fullName>
    </recommendedName>
</protein>
<accession>P9WJ76</accession>
<accession>L0T890</accession>
<accession>O53974</accession>
<accession>Q7D7N3</accession>